<keyword id="KW-0030">Aminoacyl-tRNA synthetase</keyword>
<keyword id="KW-0067">ATP-binding</keyword>
<keyword id="KW-0963">Cytoplasm</keyword>
<keyword id="KW-0436">Ligase</keyword>
<keyword id="KW-0547">Nucleotide-binding</keyword>
<keyword id="KW-0648">Protein biosynthesis</keyword>
<keyword id="KW-1185">Reference proteome</keyword>
<accession>A4J7C9</accession>
<gene>
    <name evidence="1" type="primary">glyS</name>
    <name type="ordered locus">Dred_2472</name>
</gene>
<reference key="1">
    <citation type="submission" date="2007-03" db="EMBL/GenBank/DDBJ databases">
        <title>Complete sequence of Desulfotomaculum reducens MI-1.</title>
        <authorList>
            <consortium name="US DOE Joint Genome Institute"/>
            <person name="Copeland A."/>
            <person name="Lucas S."/>
            <person name="Lapidus A."/>
            <person name="Barry K."/>
            <person name="Detter J.C."/>
            <person name="Glavina del Rio T."/>
            <person name="Hammon N."/>
            <person name="Israni S."/>
            <person name="Dalin E."/>
            <person name="Tice H."/>
            <person name="Pitluck S."/>
            <person name="Sims D."/>
            <person name="Brettin T."/>
            <person name="Bruce D."/>
            <person name="Han C."/>
            <person name="Tapia R."/>
            <person name="Schmutz J."/>
            <person name="Larimer F."/>
            <person name="Land M."/>
            <person name="Hauser L."/>
            <person name="Kyrpides N."/>
            <person name="Kim E."/>
            <person name="Tebo B.M."/>
            <person name="Richardson P."/>
        </authorList>
    </citation>
    <scope>NUCLEOTIDE SEQUENCE [LARGE SCALE GENOMIC DNA]</scope>
    <source>
        <strain>ATCC BAA-1160 / DSM 100696 / MI-1</strain>
    </source>
</reference>
<evidence type="ECO:0000255" key="1">
    <source>
        <dbReference type="HAMAP-Rule" id="MF_00255"/>
    </source>
</evidence>
<comment type="catalytic activity">
    <reaction evidence="1">
        <text>tRNA(Gly) + glycine + ATP = glycyl-tRNA(Gly) + AMP + diphosphate</text>
        <dbReference type="Rhea" id="RHEA:16013"/>
        <dbReference type="Rhea" id="RHEA-COMP:9664"/>
        <dbReference type="Rhea" id="RHEA-COMP:9683"/>
        <dbReference type="ChEBI" id="CHEBI:30616"/>
        <dbReference type="ChEBI" id="CHEBI:33019"/>
        <dbReference type="ChEBI" id="CHEBI:57305"/>
        <dbReference type="ChEBI" id="CHEBI:78442"/>
        <dbReference type="ChEBI" id="CHEBI:78522"/>
        <dbReference type="ChEBI" id="CHEBI:456215"/>
        <dbReference type="EC" id="6.1.1.14"/>
    </reaction>
</comment>
<comment type="subunit">
    <text evidence="1">Tetramer of two alpha and two beta subunits.</text>
</comment>
<comment type="subcellular location">
    <subcellularLocation>
        <location evidence="1">Cytoplasm</location>
    </subcellularLocation>
</comment>
<comment type="similarity">
    <text evidence="1">Belongs to the class-II aminoacyl-tRNA synthetase family.</text>
</comment>
<organism>
    <name type="scientific">Desulforamulus reducens (strain ATCC BAA-1160 / DSM 100696 / MI-1)</name>
    <name type="common">Desulfotomaculum reducens</name>
    <dbReference type="NCBI Taxonomy" id="349161"/>
    <lineage>
        <taxon>Bacteria</taxon>
        <taxon>Bacillati</taxon>
        <taxon>Bacillota</taxon>
        <taxon>Clostridia</taxon>
        <taxon>Eubacteriales</taxon>
        <taxon>Peptococcaceae</taxon>
        <taxon>Desulforamulus</taxon>
    </lineage>
</organism>
<proteinExistence type="inferred from homology"/>
<name>SYGB_DESRM</name>
<dbReference type="EC" id="6.1.1.14" evidence="1"/>
<dbReference type="EMBL" id="CP000612">
    <property type="protein sequence ID" value="ABO50982.1"/>
    <property type="molecule type" value="Genomic_DNA"/>
</dbReference>
<dbReference type="RefSeq" id="WP_011878780.1">
    <property type="nucleotide sequence ID" value="NC_009253.1"/>
</dbReference>
<dbReference type="SMR" id="A4J7C9"/>
<dbReference type="STRING" id="349161.Dred_2472"/>
<dbReference type="KEGG" id="drm:Dred_2472"/>
<dbReference type="eggNOG" id="COG0751">
    <property type="taxonomic scope" value="Bacteria"/>
</dbReference>
<dbReference type="HOGENOM" id="CLU_007220_2_2_9"/>
<dbReference type="OrthoDB" id="9775440at2"/>
<dbReference type="Proteomes" id="UP000001556">
    <property type="component" value="Chromosome"/>
</dbReference>
<dbReference type="GO" id="GO:0005829">
    <property type="term" value="C:cytosol"/>
    <property type="evidence" value="ECO:0007669"/>
    <property type="project" value="TreeGrafter"/>
</dbReference>
<dbReference type="GO" id="GO:0004814">
    <property type="term" value="F:arginine-tRNA ligase activity"/>
    <property type="evidence" value="ECO:0007669"/>
    <property type="project" value="InterPro"/>
</dbReference>
<dbReference type="GO" id="GO:0005524">
    <property type="term" value="F:ATP binding"/>
    <property type="evidence" value="ECO:0007669"/>
    <property type="project" value="UniProtKB-UniRule"/>
</dbReference>
<dbReference type="GO" id="GO:0004820">
    <property type="term" value="F:glycine-tRNA ligase activity"/>
    <property type="evidence" value="ECO:0007669"/>
    <property type="project" value="UniProtKB-UniRule"/>
</dbReference>
<dbReference type="GO" id="GO:0006420">
    <property type="term" value="P:arginyl-tRNA aminoacylation"/>
    <property type="evidence" value="ECO:0007669"/>
    <property type="project" value="InterPro"/>
</dbReference>
<dbReference type="GO" id="GO:0006426">
    <property type="term" value="P:glycyl-tRNA aminoacylation"/>
    <property type="evidence" value="ECO:0007669"/>
    <property type="project" value="UniProtKB-UniRule"/>
</dbReference>
<dbReference type="HAMAP" id="MF_00255">
    <property type="entry name" value="Gly_tRNA_synth_beta"/>
    <property type="match status" value="1"/>
</dbReference>
<dbReference type="InterPro" id="IPR008909">
    <property type="entry name" value="DALR_anticod-bd"/>
</dbReference>
<dbReference type="InterPro" id="IPR015944">
    <property type="entry name" value="Gly-tRNA-synth_bsu"/>
</dbReference>
<dbReference type="InterPro" id="IPR006194">
    <property type="entry name" value="Gly-tRNA-synth_heterodimer"/>
</dbReference>
<dbReference type="NCBIfam" id="TIGR00211">
    <property type="entry name" value="glyS"/>
    <property type="match status" value="1"/>
</dbReference>
<dbReference type="PANTHER" id="PTHR30075:SF2">
    <property type="entry name" value="GLYCINE--TRNA LIGASE, CHLOROPLASTIC_MITOCHONDRIAL 2"/>
    <property type="match status" value="1"/>
</dbReference>
<dbReference type="PANTHER" id="PTHR30075">
    <property type="entry name" value="GLYCYL-TRNA SYNTHETASE"/>
    <property type="match status" value="1"/>
</dbReference>
<dbReference type="Pfam" id="PF05746">
    <property type="entry name" value="DALR_1"/>
    <property type="match status" value="1"/>
</dbReference>
<dbReference type="Pfam" id="PF02092">
    <property type="entry name" value="tRNA_synt_2f"/>
    <property type="match status" value="1"/>
</dbReference>
<dbReference type="PRINTS" id="PR01045">
    <property type="entry name" value="TRNASYNTHGB"/>
</dbReference>
<dbReference type="SUPFAM" id="SSF109604">
    <property type="entry name" value="HD-domain/PDEase-like"/>
    <property type="match status" value="1"/>
</dbReference>
<dbReference type="PROSITE" id="PS50861">
    <property type="entry name" value="AA_TRNA_LIGASE_II_GLYAB"/>
    <property type="match status" value="1"/>
</dbReference>
<sequence length="695" mass="77489">MAKDFLLEVGIEEMPARFLGPALTQLKEQTVKTLQELRIEYADIQTYGTPRRLVLYIKDLAENQAALEKEVKGPAKKAAFDAAGNPTKAILGFTRSQGVSMEDLVVRSIGQVEYLYALKREEGRPTAQVLAEICPGLIAGLHFPKPMRWGELELRFARPIRWLLALFGEAVVPFELANLQSNRFTYGHRFLSTGDLSIANPEDYFTKIRGAYVLIDPAERKELIWQQVQELATAEGGVVEKDEDLLDEITNILEWPTALCGTFDEDYLKLPGAVLVTPMREHQRYFPVVSNEGKLLNKFIAVRNGTRAYIEIVTAGNEKVLRARLADAAFFFEEDLKQPLASKVNGLQKVVFLEGLGSIADKVDRIGAMADHLAETLGANEEQRENIQRGALLAKADLITNMVYEFPELQGEMGREYALRNGEAPEVAEAIFEHYLPRFAGDLLPETLAGSVLSVADKMDSIVGCFAIGIQPTGSQDPYALRRQALGICHMLIEGNIHLSLRELVQWAYQGYHEGVELKQDLNQVITEIEEFFKQRLKGILNDRGLSYDTVDAVLTAGFDDIADVVDRGMALAAFRELPAFAALMTAFNRANNLAKHATTTQVQEVHLEHSAEQELYGLLTKLEGEVRPLLEQKNYALALQKIATIQSPLDTFFESVMVMVEDEAVKTNRLALLKKLVGLSMNVADFSKIVVETK</sequence>
<feature type="chain" id="PRO_1000101273" description="Glycine--tRNA ligase beta subunit">
    <location>
        <begin position="1"/>
        <end position="695"/>
    </location>
</feature>
<protein>
    <recommendedName>
        <fullName evidence="1">Glycine--tRNA ligase beta subunit</fullName>
        <ecNumber evidence="1">6.1.1.14</ecNumber>
    </recommendedName>
    <alternativeName>
        <fullName evidence="1">Glycyl-tRNA synthetase beta subunit</fullName>
        <shortName evidence="1">GlyRS</shortName>
    </alternativeName>
</protein>